<protein>
    <recommendedName>
        <fullName evidence="2">D-alanine--D-alanine ligase</fullName>
        <ecNumber evidence="2">6.3.2.4</ecNumber>
    </recommendedName>
    <alternativeName>
        <fullName evidence="2">D-Ala-D-Ala ligase</fullName>
    </alternativeName>
    <alternativeName>
        <fullName evidence="2">D-alanylalanine synthetase</fullName>
    </alternativeName>
</protein>
<keyword id="KW-0067">ATP-binding</keyword>
<keyword id="KW-0133">Cell shape</keyword>
<keyword id="KW-0961">Cell wall biogenesis/degradation</keyword>
<keyword id="KW-0963">Cytoplasm</keyword>
<keyword id="KW-0436">Ligase</keyword>
<keyword id="KW-0460">Magnesium</keyword>
<keyword id="KW-0464">Manganese</keyword>
<keyword id="KW-0479">Metal-binding</keyword>
<keyword id="KW-0547">Nucleotide-binding</keyword>
<keyword id="KW-0573">Peptidoglycan synthesis</keyword>
<sequence length="348" mass="38939">MSKQTLVLLYGGRSAEREVSVLSAESVMRAVNYDKFLVKTYFITQMGQFIKTQQFSEKPSESERLMTNETIELTQKIKPSDIYEEGAVVFPVLHGPMGEDGSIQGFLEVLRMPYIGTNVMSSSIAMDKITTKRVLESIGIPQVAYTVYIDGQDLEACLVETLARLTFPIFVKPANMGSSVGISKAQTKVELRKAIQLALTYDSRVLIEQGVVAREIEVGLLGNDKVKSTLPGEVIKDVDFYDYQAKYVDNKITMAIPADVDQSIVTEMRSYAEVAFKALGGCGLSRCDFFLTQDGQVYLNELNTMPGFTQWSMYPLLWENMGLAYPDLIEVLVTLAQEMFDQRESHLI</sequence>
<name>DDL_STRPD</name>
<accession>Q1JG50</accession>
<organism>
    <name type="scientific">Streptococcus pyogenes serotype M2 (strain MGAS10270)</name>
    <dbReference type="NCBI Taxonomy" id="370552"/>
    <lineage>
        <taxon>Bacteria</taxon>
        <taxon>Bacillati</taxon>
        <taxon>Bacillota</taxon>
        <taxon>Bacilli</taxon>
        <taxon>Lactobacillales</taxon>
        <taxon>Streptococcaceae</taxon>
        <taxon>Streptococcus</taxon>
    </lineage>
</organism>
<reference key="1">
    <citation type="journal article" date="2006" name="Proc. Natl. Acad. Sci. U.S.A.">
        <title>Molecular genetic anatomy of inter- and intraserotype variation in the human bacterial pathogen group A Streptococcus.</title>
        <authorList>
            <person name="Beres S.B."/>
            <person name="Richter E.W."/>
            <person name="Nagiec M.J."/>
            <person name="Sumby P."/>
            <person name="Porcella S.F."/>
            <person name="DeLeo F.R."/>
            <person name="Musser J.M."/>
        </authorList>
    </citation>
    <scope>NUCLEOTIDE SEQUENCE [LARGE SCALE GENOMIC DNA]</scope>
    <source>
        <strain>MGAS10270</strain>
    </source>
</reference>
<gene>
    <name evidence="2" type="primary">ddl</name>
    <name type="ordered locus">MGAS10270_Spy1229</name>
</gene>
<proteinExistence type="inferred from homology"/>
<comment type="function">
    <text evidence="2">Cell wall formation.</text>
</comment>
<comment type="catalytic activity">
    <reaction evidence="2">
        <text>2 D-alanine + ATP = D-alanyl-D-alanine + ADP + phosphate + H(+)</text>
        <dbReference type="Rhea" id="RHEA:11224"/>
        <dbReference type="ChEBI" id="CHEBI:15378"/>
        <dbReference type="ChEBI" id="CHEBI:30616"/>
        <dbReference type="ChEBI" id="CHEBI:43474"/>
        <dbReference type="ChEBI" id="CHEBI:57416"/>
        <dbReference type="ChEBI" id="CHEBI:57822"/>
        <dbReference type="ChEBI" id="CHEBI:456216"/>
        <dbReference type="EC" id="6.3.2.4"/>
    </reaction>
</comment>
<comment type="cofactor">
    <cofactor evidence="1">
        <name>Mg(2+)</name>
        <dbReference type="ChEBI" id="CHEBI:18420"/>
    </cofactor>
    <cofactor evidence="1">
        <name>Mn(2+)</name>
        <dbReference type="ChEBI" id="CHEBI:29035"/>
    </cofactor>
    <text evidence="1">Binds 2 magnesium or manganese ions per subunit.</text>
</comment>
<comment type="pathway">
    <text evidence="2">Cell wall biogenesis; peptidoglycan biosynthesis.</text>
</comment>
<comment type="subcellular location">
    <subcellularLocation>
        <location evidence="2">Cytoplasm</location>
    </subcellularLocation>
</comment>
<comment type="similarity">
    <text evidence="2">Belongs to the D-alanine--D-alanine ligase family.</text>
</comment>
<feature type="chain" id="PRO_1000030502" description="D-alanine--D-alanine ligase">
    <location>
        <begin position="1"/>
        <end position="348"/>
    </location>
</feature>
<feature type="domain" description="ATP-grasp" evidence="2">
    <location>
        <begin position="132"/>
        <end position="334"/>
    </location>
</feature>
<feature type="binding site" evidence="2">
    <location>
        <begin position="162"/>
        <end position="217"/>
    </location>
    <ligand>
        <name>ATP</name>
        <dbReference type="ChEBI" id="CHEBI:30616"/>
    </ligand>
</feature>
<feature type="binding site" evidence="2">
    <location>
        <position position="288"/>
    </location>
    <ligand>
        <name>Mg(2+)</name>
        <dbReference type="ChEBI" id="CHEBI:18420"/>
        <label>1</label>
    </ligand>
</feature>
<feature type="binding site" evidence="2">
    <location>
        <position position="301"/>
    </location>
    <ligand>
        <name>Mg(2+)</name>
        <dbReference type="ChEBI" id="CHEBI:18420"/>
        <label>1</label>
    </ligand>
</feature>
<feature type="binding site" evidence="2">
    <location>
        <position position="301"/>
    </location>
    <ligand>
        <name>Mg(2+)</name>
        <dbReference type="ChEBI" id="CHEBI:18420"/>
        <label>2</label>
    </ligand>
</feature>
<feature type="binding site" evidence="2">
    <location>
        <position position="303"/>
    </location>
    <ligand>
        <name>Mg(2+)</name>
        <dbReference type="ChEBI" id="CHEBI:18420"/>
        <label>2</label>
    </ligand>
</feature>
<evidence type="ECO:0000250" key="1"/>
<evidence type="ECO:0000255" key="2">
    <source>
        <dbReference type="HAMAP-Rule" id="MF_00047"/>
    </source>
</evidence>
<dbReference type="EC" id="6.3.2.4" evidence="2"/>
<dbReference type="EMBL" id="CP000260">
    <property type="protein sequence ID" value="ABF34294.1"/>
    <property type="molecule type" value="Genomic_DNA"/>
</dbReference>
<dbReference type="SMR" id="Q1JG50"/>
<dbReference type="KEGG" id="sph:MGAS10270_Spy1229"/>
<dbReference type="HOGENOM" id="CLU_039268_0_0_9"/>
<dbReference type="UniPathway" id="UPA00219"/>
<dbReference type="Proteomes" id="UP000002436">
    <property type="component" value="Chromosome"/>
</dbReference>
<dbReference type="GO" id="GO:0005829">
    <property type="term" value="C:cytosol"/>
    <property type="evidence" value="ECO:0007669"/>
    <property type="project" value="TreeGrafter"/>
</dbReference>
<dbReference type="GO" id="GO:0005524">
    <property type="term" value="F:ATP binding"/>
    <property type="evidence" value="ECO:0007669"/>
    <property type="project" value="UniProtKB-KW"/>
</dbReference>
<dbReference type="GO" id="GO:0008716">
    <property type="term" value="F:D-alanine-D-alanine ligase activity"/>
    <property type="evidence" value="ECO:0007669"/>
    <property type="project" value="UniProtKB-UniRule"/>
</dbReference>
<dbReference type="GO" id="GO:0046872">
    <property type="term" value="F:metal ion binding"/>
    <property type="evidence" value="ECO:0007669"/>
    <property type="project" value="UniProtKB-KW"/>
</dbReference>
<dbReference type="GO" id="GO:0071555">
    <property type="term" value="P:cell wall organization"/>
    <property type="evidence" value="ECO:0007669"/>
    <property type="project" value="UniProtKB-KW"/>
</dbReference>
<dbReference type="GO" id="GO:0009252">
    <property type="term" value="P:peptidoglycan biosynthetic process"/>
    <property type="evidence" value="ECO:0007669"/>
    <property type="project" value="UniProtKB-UniRule"/>
</dbReference>
<dbReference type="GO" id="GO:0008360">
    <property type="term" value="P:regulation of cell shape"/>
    <property type="evidence" value="ECO:0007669"/>
    <property type="project" value="UniProtKB-KW"/>
</dbReference>
<dbReference type="FunFam" id="3.30.1490.20:FF:000007">
    <property type="entry name" value="D-alanine--D-alanine ligase"/>
    <property type="match status" value="1"/>
</dbReference>
<dbReference type="FunFam" id="3.30.470.20:FF:000008">
    <property type="entry name" value="D-alanine--D-alanine ligase"/>
    <property type="match status" value="1"/>
</dbReference>
<dbReference type="Gene3D" id="3.40.50.20">
    <property type="match status" value="1"/>
</dbReference>
<dbReference type="Gene3D" id="3.30.1490.20">
    <property type="entry name" value="ATP-grasp fold, A domain"/>
    <property type="match status" value="1"/>
</dbReference>
<dbReference type="Gene3D" id="3.30.470.20">
    <property type="entry name" value="ATP-grasp fold, B domain"/>
    <property type="match status" value="1"/>
</dbReference>
<dbReference type="HAMAP" id="MF_00047">
    <property type="entry name" value="Dala_Dala_lig"/>
    <property type="match status" value="1"/>
</dbReference>
<dbReference type="InterPro" id="IPR011761">
    <property type="entry name" value="ATP-grasp"/>
</dbReference>
<dbReference type="InterPro" id="IPR013815">
    <property type="entry name" value="ATP_grasp_subdomain_1"/>
</dbReference>
<dbReference type="InterPro" id="IPR000291">
    <property type="entry name" value="D-Ala_lig_Van_CS"/>
</dbReference>
<dbReference type="InterPro" id="IPR005905">
    <property type="entry name" value="D_ala_D_ala"/>
</dbReference>
<dbReference type="InterPro" id="IPR011095">
    <property type="entry name" value="Dala_Dala_lig_C"/>
</dbReference>
<dbReference type="InterPro" id="IPR011127">
    <property type="entry name" value="Dala_Dala_lig_N"/>
</dbReference>
<dbReference type="InterPro" id="IPR016185">
    <property type="entry name" value="PreATP-grasp_dom_sf"/>
</dbReference>
<dbReference type="NCBIfam" id="TIGR01205">
    <property type="entry name" value="D_ala_D_alaTIGR"/>
    <property type="match status" value="1"/>
</dbReference>
<dbReference type="NCBIfam" id="NF002528">
    <property type="entry name" value="PRK01966.1-4"/>
    <property type="match status" value="1"/>
</dbReference>
<dbReference type="NCBIfam" id="NF002529">
    <property type="entry name" value="PRK01966.1-5"/>
    <property type="match status" value="1"/>
</dbReference>
<dbReference type="PANTHER" id="PTHR23132">
    <property type="entry name" value="D-ALANINE--D-ALANINE LIGASE"/>
    <property type="match status" value="1"/>
</dbReference>
<dbReference type="PANTHER" id="PTHR23132:SF25">
    <property type="entry name" value="D-ALANINE--D-ALANINE LIGASE A"/>
    <property type="match status" value="1"/>
</dbReference>
<dbReference type="Pfam" id="PF07478">
    <property type="entry name" value="Dala_Dala_lig_C"/>
    <property type="match status" value="1"/>
</dbReference>
<dbReference type="Pfam" id="PF01820">
    <property type="entry name" value="Dala_Dala_lig_N"/>
    <property type="match status" value="1"/>
</dbReference>
<dbReference type="PIRSF" id="PIRSF039102">
    <property type="entry name" value="Ddl/VanB"/>
    <property type="match status" value="1"/>
</dbReference>
<dbReference type="SUPFAM" id="SSF56059">
    <property type="entry name" value="Glutathione synthetase ATP-binding domain-like"/>
    <property type="match status" value="1"/>
</dbReference>
<dbReference type="SUPFAM" id="SSF52440">
    <property type="entry name" value="PreATP-grasp domain"/>
    <property type="match status" value="1"/>
</dbReference>
<dbReference type="PROSITE" id="PS50975">
    <property type="entry name" value="ATP_GRASP"/>
    <property type="match status" value="1"/>
</dbReference>
<dbReference type="PROSITE" id="PS00843">
    <property type="entry name" value="DALA_DALA_LIGASE_1"/>
    <property type="match status" value="1"/>
</dbReference>
<dbReference type="PROSITE" id="PS00844">
    <property type="entry name" value="DALA_DALA_LIGASE_2"/>
    <property type="match status" value="1"/>
</dbReference>